<keyword id="KW-1185">Reference proteome</keyword>
<keyword id="KW-0687">Ribonucleoprotein</keyword>
<keyword id="KW-0689">Ribosomal protein</keyword>
<name>RL32_MYCPU</name>
<evidence type="ECO:0000256" key="1">
    <source>
        <dbReference type="SAM" id="MobiDB-lite"/>
    </source>
</evidence>
<evidence type="ECO:0000305" key="2"/>
<sequence>MAIVPKRKTSKQRKRKRQTHDALKVSTLVSCQNCSVQTIPHVTCKSCGFYKGRQVLKVKSS</sequence>
<protein>
    <recommendedName>
        <fullName evidence="2">Large ribosomal subunit protein bL32</fullName>
    </recommendedName>
    <alternativeName>
        <fullName>50S ribosomal protein L32</fullName>
    </alternativeName>
</protein>
<accession>Q98QN7</accession>
<comment type="similarity">
    <text evidence="2">Belongs to the bacterial ribosomal protein bL32 family.</text>
</comment>
<feature type="chain" id="PRO_0000172371" description="Large ribosomal subunit protein bL32">
    <location>
        <begin position="1"/>
        <end position="61"/>
    </location>
</feature>
<feature type="region of interest" description="Disordered" evidence="1">
    <location>
        <begin position="1"/>
        <end position="20"/>
    </location>
</feature>
<feature type="compositionally biased region" description="Basic residues" evidence="1">
    <location>
        <begin position="1"/>
        <end position="18"/>
    </location>
</feature>
<proteinExistence type="inferred from homology"/>
<dbReference type="EMBL" id="AL445564">
    <property type="protein sequence ID" value="CAC13497.1"/>
    <property type="molecule type" value="Genomic_DNA"/>
</dbReference>
<dbReference type="PIR" id="D90552">
    <property type="entry name" value="D90552"/>
</dbReference>
<dbReference type="RefSeq" id="WP_010925128.1">
    <property type="nucleotide sequence ID" value="NC_002771.1"/>
</dbReference>
<dbReference type="SMR" id="Q98QN7"/>
<dbReference type="STRING" id="272635.gene:17576915"/>
<dbReference type="KEGG" id="mpu:MYPU_3240"/>
<dbReference type="eggNOG" id="COG0333">
    <property type="taxonomic scope" value="Bacteria"/>
</dbReference>
<dbReference type="HOGENOM" id="CLU_129084_1_3_14"/>
<dbReference type="BioCyc" id="MPUL272635:G1GT6-324-MONOMER"/>
<dbReference type="Proteomes" id="UP000000528">
    <property type="component" value="Chromosome"/>
</dbReference>
<dbReference type="GO" id="GO:0015934">
    <property type="term" value="C:large ribosomal subunit"/>
    <property type="evidence" value="ECO:0007669"/>
    <property type="project" value="InterPro"/>
</dbReference>
<dbReference type="GO" id="GO:0003735">
    <property type="term" value="F:structural constituent of ribosome"/>
    <property type="evidence" value="ECO:0007669"/>
    <property type="project" value="InterPro"/>
</dbReference>
<dbReference type="GO" id="GO:0006412">
    <property type="term" value="P:translation"/>
    <property type="evidence" value="ECO:0007669"/>
    <property type="project" value="UniProtKB-UniRule"/>
</dbReference>
<dbReference type="Gene3D" id="1.20.5.640">
    <property type="entry name" value="Single helix bin"/>
    <property type="match status" value="1"/>
</dbReference>
<dbReference type="HAMAP" id="MF_00340">
    <property type="entry name" value="Ribosomal_bL32"/>
    <property type="match status" value="1"/>
</dbReference>
<dbReference type="InterPro" id="IPR002677">
    <property type="entry name" value="Ribosomal_bL32"/>
</dbReference>
<dbReference type="InterPro" id="IPR044957">
    <property type="entry name" value="Ribosomal_bL32_bact"/>
</dbReference>
<dbReference type="InterPro" id="IPR011332">
    <property type="entry name" value="Ribosomal_zn-bd"/>
</dbReference>
<dbReference type="NCBIfam" id="TIGR01031">
    <property type="entry name" value="rpmF_bact"/>
    <property type="match status" value="1"/>
</dbReference>
<dbReference type="PANTHER" id="PTHR35534">
    <property type="entry name" value="50S RIBOSOMAL PROTEIN L32"/>
    <property type="match status" value="1"/>
</dbReference>
<dbReference type="PANTHER" id="PTHR35534:SF1">
    <property type="entry name" value="LARGE RIBOSOMAL SUBUNIT PROTEIN BL32"/>
    <property type="match status" value="1"/>
</dbReference>
<dbReference type="Pfam" id="PF01783">
    <property type="entry name" value="Ribosomal_L32p"/>
    <property type="match status" value="1"/>
</dbReference>
<dbReference type="SUPFAM" id="SSF57829">
    <property type="entry name" value="Zn-binding ribosomal proteins"/>
    <property type="match status" value="1"/>
</dbReference>
<reference key="1">
    <citation type="journal article" date="2001" name="Nucleic Acids Res.">
        <title>The complete genome sequence of the murine respiratory pathogen Mycoplasma pulmonis.</title>
        <authorList>
            <person name="Chambaud I."/>
            <person name="Heilig R."/>
            <person name="Ferris S."/>
            <person name="Barbe V."/>
            <person name="Samson D."/>
            <person name="Galisson F."/>
            <person name="Moszer I."/>
            <person name="Dybvig K."/>
            <person name="Wroblewski H."/>
            <person name="Viari A."/>
            <person name="Rocha E.P.C."/>
            <person name="Blanchard A."/>
        </authorList>
    </citation>
    <scope>NUCLEOTIDE SEQUENCE [LARGE SCALE GENOMIC DNA]</scope>
    <source>
        <strain>UAB CTIP</strain>
    </source>
</reference>
<organism>
    <name type="scientific">Mycoplasmopsis pulmonis (strain UAB CTIP)</name>
    <name type="common">Mycoplasma pulmonis</name>
    <dbReference type="NCBI Taxonomy" id="272635"/>
    <lineage>
        <taxon>Bacteria</taxon>
        <taxon>Bacillati</taxon>
        <taxon>Mycoplasmatota</taxon>
        <taxon>Mycoplasmoidales</taxon>
        <taxon>Metamycoplasmataceae</taxon>
        <taxon>Mycoplasmopsis</taxon>
    </lineage>
</organism>
<gene>
    <name type="primary">rpmF</name>
    <name type="ordered locus">MYPU_3240</name>
</gene>